<dbReference type="EMBL" id="CP000668">
    <property type="protein sequence ID" value="ABP39390.1"/>
    <property type="status" value="ALT_INIT"/>
    <property type="molecule type" value="Genomic_DNA"/>
</dbReference>
<dbReference type="RefSeq" id="WP_002227934.1">
    <property type="nucleotide sequence ID" value="NZ_CP009715.1"/>
</dbReference>
<dbReference type="SMR" id="A4TJC8"/>
<dbReference type="GeneID" id="57976524"/>
<dbReference type="KEGG" id="ypp:YPDSF_0990"/>
<dbReference type="PATRIC" id="fig|386656.14.peg.2856"/>
<dbReference type="GO" id="GO:0005886">
    <property type="term" value="C:plasma membrane"/>
    <property type="evidence" value="ECO:0007669"/>
    <property type="project" value="UniProtKB-SubCell"/>
</dbReference>
<dbReference type="GO" id="GO:0009055">
    <property type="term" value="F:electron transfer activity"/>
    <property type="evidence" value="ECO:0007669"/>
    <property type="project" value="UniProtKB-UniRule"/>
</dbReference>
<dbReference type="GO" id="GO:0015035">
    <property type="term" value="F:protein-disulfide reductase activity"/>
    <property type="evidence" value="ECO:0007669"/>
    <property type="project" value="UniProtKB-UniRule"/>
</dbReference>
<dbReference type="GO" id="GO:0006457">
    <property type="term" value="P:protein folding"/>
    <property type="evidence" value="ECO:0007669"/>
    <property type="project" value="InterPro"/>
</dbReference>
<dbReference type="FunFam" id="1.20.1550.10:FF:000001">
    <property type="entry name" value="Disulfide bond formation protein B"/>
    <property type="match status" value="1"/>
</dbReference>
<dbReference type="Gene3D" id="1.20.1550.10">
    <property type="entry name" value="DsbB-like"/>
    <property type="match status" value="1"/>
</dbReference>
<dbReference type="HAMAP" id="MF_00286">
    <property type="entry name" value="DsbB"/>
    <property type="match status" value="1"/>
</dbReference>
<dbReference type="InterPro" id="IPR003752">
    <property type="entry name" value="DiS_bond_form_DsbB/BdbC"/>
</dbReference>
<dbReference type="InterPro" id="IPR022920">
    <property type="entry name" value="Disulphide_bond_form_DsbB"/>
</dbReference>
<dbReference type="InterPro" id="IPR050183">
    <property type="entry name" value="DsbB"/>
</dbReference>
<dbReference type="InterPro" id="IPR023380">
    <property type="entry name" value="DsbB-like_sf"/>
</dbReference>
<dbReference type="NCBIfam" id="NF002485">
    <property type="entry name" value="PRK01749.1"/>
    <property type="match status" value="1"/>
</dbReference>
<dbReference type="PANTHER" id="PTHR36570">
    <property type="entry name" value="DISULFIDE BOND FORMATION PROTEIN B"/>
    <property type="match status" value="1"/>
</dbReference>
<dbReference type="PANTHER" id="PTHR36570:SF2">
    <property type="entry name" value="DISULFIDE BOND FORMATION PROTEIN B"/>
    <property type="match status" value="1"/>
</dbReference>
<dbReference type="Pfam" id="PF02600">
    <property type="entry name" value="DsbB"/>
    <property type="match status" value="1"/>
</dbReference>
<dbReference type="SUPFAM" id="SSF158442">
    <property type="entry name" value="DsbB-like"/>
    <property type="match status" value="1"/>
</dbReference>
<protein>
    <recommendedName>
        <fullName evidence="1">Disulfide bond formation protein B</fullName>
    </recommendedName>
    <alternativeName>
        <fullName evidence="1">Disulfide oxidoreductase</fullName>
    </alternativeName>
</protein>
<comment type="function">
    <text evidence="1">Required for disulfide bond formation in some periplasmic proteins. Acts by oxidizing the DsbA protein.</text>
</comment>
<comment type="subcellular location">
    <subcellularLocation>
        <location evidence="1">Cell inner membrane</location>
        <topology evidence="1">Multi-pass membrane protein</topology>
    </subcellularLocation>
</comment>
<comment type="similarity">
    <text evidence="1">Belongs to the DsbB family.</text>
</comment>
<comment type="sequence caution" evidence="2">
    <conflict type="erroneous initiation">
        <sequence resource="EMBL-CDS" id="ABP39390"/>
    </conflict>
</comment>
<sequence>MLQFLNRCSRGRGAWLLMALTAFLLELTALYFQHIMLLQPCVMCIYERVALFGILGASLLGAIAPRSPLRYLAIAVWIYSAWKGVQLAWAHTMLQLNPSPFNTCDFFVNFPSWLPLDKWLPAVFAASGDCSERQWQFMSLEMPQWLVGIFAAYLVIAVLVLISQFVKPKRRDLFGR</sequence>
<gene>
    <name evidence="1" type="primary">dsbB</name>
    <name type="ordered locus">YPDSF_0990</name>
</gene>
<proteinExistence type="inferred from homology"/>
<reference key="1">
    <citation type="submission" date="2007-02" db="EMBL/GenBank/DDBJ databases">
        <title>Complete sequence of chromosome of Yersinia pestis Pestoides F.</title>
        <authorList>
            <consortium name="US DOE Joint Genome Institute"/>
            <person name="Copeland A."/>
            <person name="Lucas S."/>
            <person name="Lapidus A."/>
            <person name="Barry K."/>
            <person name="Detter J.C."/>
            <person name="Glavina del Rio T."/>
            <person name="Hammon N."/>
            <person name="Israni S."/>
            <person name="Dalin E."/>
            <person name="Tice H."/>
            <person name="Pitluck S."/>
            <person name="Di Bartolo G."/>
            <person name="Chain P."/>
            <person name="Malfatti S."/>
            <person name="Shin M."/>
            <person name="Vergez L."/>
            <person name="Schmutz J."/>
            <person name="Larimer F."/>
            <person name="Land M."/>
            <person name="Hauser L."/>
            <person name="Worsham P."/>
            <person name="Chu M."/>
            <person name="Bearden S."/>
            <person name="Garcia E."/>
            <person name="Richardson P."/>
        </authorList>
    </citation>
    <scope>NUCLEOTIDE SEQUENCE [LARGE SCALE GENOMIC DNA]</scope>
    <source>
        <strain>Pestoides F</strain>
    </source>
</reference>
<organism>
    <name type="scientific">Yersinia pestis (strain Pestoides F)</name>
    <dbReference type="NCBI Taxonomy" id="386656"/>
    <lineage>
        <taxon>Bacteria</taxon>
        <taxon>Pseudomonadati</taxon>
        <taxon>Pseudomonadota</taxon>
        <taxon>Gammaproteobacteria</taxon>
        <taxon>Enterobacterales</taxon>
        <taxon>Yersiniaceae</taxon>
        <taxon>Yersinia</taxon>
    </lineage>
</organism>
<accession>A4TJC8</accession>
<feature type="chain" id="PRO_0000298428" description="Disulfide bond formation protein B">
    <location>
        <begin position="1"/>
        <end position="176"/>
    </location>
</feature>
<feature type="topological domain" description="Cytoplasmic" evidence="1">
    <location>
        <begin position="1"/>
        <end position="14"/>
    </location>
</feature>
<feature type="transmembrane region" description="Helical" evidence="1">
    <location>
        <begin position="15"/>
        <end position="31"/>
    </location>
</feature>
<feature type="topological domain" description="Periplasmic" evidence="1">
    <location>
        <begin position="32"/>
        <end position="49"/>
    </location>
</feature>
<feature type="transmembrane region" description="Helical" evidence="1">
    <location>
        <begin position="50"/>
        <end position="65"/>
    </location>
</feature>
<feature type="topological domain" description="Cytoplasmic" evidence="1">
    <location>
        <begin position="66"/>
        <end position="71"/>
    </location>
</feature>
<feature type="transmembrane region" description="Helical" evidence="1">
    <location>
        <begin position="72"/>
        <end position="89"/>
    </location>
</feature>
<feature type="topological domain" description="Periplasmic" evidence="1">
    <location>
        <begin position="90"/>
        <end position="144"/>
    </location>
</feature>
<feature type="transmembrane region" description="Helical" evidence="1">
    <location>
        <begin position="145"/>
        <end position="163"/>
    </location>
</feature>
<feature type="topological domain" description="Cytoplasmic" evidence="1">
    <location>
        <begin position="164"/>
        <end position="176"/>
    </location>
</feature>
<feature type="disulfide bond" description="Redox-active" evidence="1">
    <location>
        <begin position="41"/>
        <end position="44"/>
    </location>
</feature>
<feature type="disulfide bond" description="Redox-active" evidence="1">
    <location>
        <begin position="104"/>
        <end position="130"/>
    </location>
</feature>
<evidence type="ECO:0000255" key="1">
    <source>
        <dbReference type="HAMAP-Rule" id="MF_00286"/>
    </source>
</evidence>
<evidence type="ECO:0000305" key="2"/>
<keyword id="KW-0997">Cell inner membrane</keyword>
<keyword id="KW-1003">Cell membrane</keyword>
<keyword id="KW-0143">Chaperone</keyword>
<keyword id="KW-1015">Disulfide bond</keyword>
<keyword id="KW-0249">Electron transport</keyword>
<keyword id="KW-0472">Membrane</keyword>
<keyword id="KW-0560">Oxidoreductase</keyword>
<keyword id="KW-0676">Redox-active center</keyword>
<keyword id="KW-0812">Transmembrane</keyword>
<keyword id="KW-1133">Transmembrane helix</keyword>
<keyword id="KW-0813">Transport</keyword>
<name>DSBB_YERPP</name>